<proteinExistence type="evidence at protein level"/>
<organism>
    <name type="scientific">Bacillus subtilis (strain 168)</name>
    <dbReference type="NCBI Taxonomy" id="224308"/>
    <lineage>
        <taxon>Bacteria</taxon>
        <taxon>Bacillati</taxon>
        <taxon>Bacillota</taxon>
        <taxon>Bacilli</taxon>
        <taxon>Bacillales</taxon>
        <taxon>Bacillaceae</taxon>
        <taxon>Bacillus</taxon>
    </lineage>
</organism>
<evidence type="ECO:0000255" key="1"/>
<evidence type="ECO:0000305" key="2"/>
<reference key="1">
    <citation type="journal article" date="1996" name="Microbiology">
        <title>Systematic sequencing of the 283 kb 210 degrees-232 degrees region of the Bacillus subtilis genome containing the skin element and many sporulation genes.</title>
        <authorList>
            <person name="Mizuno M."/>
            <person name="Masuda S."/>
            <person name="Takemaru K."/>
            <person name="Hosono S."/>
            <person name="Sato T."/>
            <person name="Takeuchi M."/>
            <person name="Kobayashi Y."/>
        </authorList>
    </citation>
    <scope>NUCLEOTIDE SEQUENCE [GENOMIC DNA]</scope>
    <source>
        <strain>168 / JH642</strain>
    </source>
</reference>
<reference key="2">
    <citation type="journal article" date="1997" name="Nature">
        <title>The complete genome sequence of the Gram-positive bacterium Bacillus subtilis.</title>
        <authorList>
            <person name="Kunst F."/>
            <person name="Ogasawara N."/>
            <person name="Moszer I."/>
            <person name="Albertini A.M."/>
            <person name="Alloni G."/>
            <person name="Azevedo V."/>
            <person name="Bertero M.G."/>
            <person name="Bessieres P."/>
            <person name="Bolotin A."/>
            <person name="Borchert S."/>
            <person name="Borriss R."/>
            <person name="Boursier L."/>
            <person name="Brans A."/>
            <person name="Braun M."/>
            <person name="Brignell S.C."/>
            <person name="Bron S."/>
            <person name="Brouillet S."/>
            <person name="Bruschi C.V."/>
            <person name="Caldwell B."/>
            <person name="Capuano V."/>
            <person name="Carter N.M."/>
            <person name="Choi S.-K."/>
            <person name="Codani J.-J."/>
            <person name="Connerton I.F."/>
            <person name="Cummings N.J."/>
            <person name="Daniel R.A."/>
            <person name="Denizot F."/>
            <person name="Devine K.M."/>
            <person name="Duesterhoeft A."/>
            <person name="Ehrlich S.D."/>
            <person name="Emmerson P.T."/>
            <person name="Entian K.-D."/>
            <person name="Errington J."/>
            <person name="Fabret C."/>
            <person name="Ferrari E."/>
            <person name="Foulger D."/>
            <person name="Fritz C."/>
            <person name="Fujita M."/>
            <person name="Fujita Y."/>
            <person name="Fuma S."/>
            <person name="Galizzi A."/>
            <person name="Galleron N."/>
            <person name="Ghim S.-Y."/>
            <person name="Glaser P."/>
            <person name="Goffeau A."/>
            <person name="Golightly E.J."/>
            <person name="Grandi G."/>
            <person name="Guiseppi G."/>
            <person name="Guy B.J."/>
            <person name="Haga K."/>
            <person name="Haiech J."/>
            <person name="Harwood C.R."/>
            <person name="Henaut A."/>
            <person name="Hilbert H."/>
            <person name="Holsappel S."/>
            <person name="Hosono S."/>
            <person name="Hullo M.-F."/>
            <person name="Itaya M."/>
            <person name="Jones L.-M."/>
            <person name="Joris B."/>
            <person name="Karamata D."/>
            <person name="Kasahara Y."/>
            <person name="Klaerr-Blanchard M."/>
            <person name="Klein C."/>
            <person name="Kobayashi Y."/>
            <person name="Koetter P."/>
            <person name="Koningstein G."/>
            <person name="Krogh S."/>
            <person name="Kumano M."/>
            <person name="Kurita K."/>
            <person name="Lapidus A."/>
            <person name="Lardinois S."/>
            <person name="Lauber J."/>
            <person name="Lazarevic V."/>
            <person name="Lee S.-M."/>
            <person name="Levine A."/>
            <person name="Liu H."/>
            <person name="Masuda S."/>
            <person name="Mauel C."/>
            <person name="Medigue C."/>
            <person name="Medina N."/>
            <person name="Mellado R.P."/>
            <person name="Mizuno M."/>
            <person name="Moestl D."/>
            <person name="Nakai S."/>
            <person name="Noback M."/>
            <person name="Noone D."/>
            <person name="O'Reilly M."/>
            <person name="Ogawa K."/>
            <person name="Ogiwara A."/>
            <person name="Oudega B."/>
            <person name="Park S.-H."/>
            <person name="Parro V."/>
            <person name="Pohl T.M."/>
            <person name="Portetelle D."/>
            <person name="Porwollik S."/>
            <person name="Prescott A.M."/>
            <person name="Presecan E."/>
            <person name="Pujic P."/>
            <person name="Purnelle B."/>
            <person name="Rapoport G."/>
            <person name="Rey M."/>
            <person name="Reynolds S."/>
            <person name="Rieger M."/>
            <person name="Rivolta C."/>
            <person name="Rocha E."/>
            <person name="Roche B."/>
            <person name="Rose M."/>
            <person name="Sadaie Y."/>
            <person name="Sato T."/>
            <person name="Scanlan E."/>
            <person name="Schleich S."/>
            <person name="Schroeter R."/>
            <person name="Scoffone F."/>
            <person name="Sekiguchi J."/>
            <person name="Sekowska A."/>
            <person name="Seror S.J."/>
            <person name="Serror P."/>
            <person name="Shin B.-S."/>
            <person name="Soldo B."/>
            <person name="Sorokin A."/>
            <person name="Tacconi E."/>
            <person name="Takagi T."/>
            <person name="Takahashi H."/>
            <person name="Takemaru K."/>
            <person name="Takeuchi M."/>
            <person name="Tamakoshi A."/>
            <person name="Tanaka T."/>
            <person name="Terpstra P."/>
            <person name="Tognoni A."/>
            <person name="Tosato V."/>
            <person name="Uchiyama S."/>
            <person name="Vandenbol M."/>
            <person name="Vannier F."/>
            <person name="Vassarotti A."/>
            <person name="Viari A."/>
            <person name="Wambutt R."/>
            <person name="Wedler E."/>
            <person name="Wedler H."/>
            <person name="Weitzenegger T."/>
            <person name="Winters P."/>
            <person name="Wipat A."/>
            <person name="Yamamoto H."/>
            <person name="Yamane K."/>
            <person name="Yasumoto K."/>
            <person name="Yata K."/>
            <person name="Yoshida K."/>
            <person name="Yoshikawa H.-F."/>
            <person name="Zumstein E."/>
            <person name="Yoshikawa H."/>
            <person name="Danchin A."/>
        </authorList>
    </citation>
    <scope>NUCLEOTIDE SEQUENCE [LARGE SCALE GENOMIC DNA]</scope>
    <source>
        <strain>168</strain>
    </source>
</reference>
<reference key="3">
    <citation type="journal article" date="2000" name="J. Biol. Chem.">
        <title>Bacillus subtilis YqkI is a novel malic/Na+-lactate antiporter that enhances growth on malate at low protonmotive force.</title>
        <authorList>
            <person name="Wei Y."/>
            <person name="Guffanti A.A."/>
            <person name="Ito M."/>
            <person name="Krulwich T.A."/>
        </authorList>
    </citation>
    <scope>CHARACTERIZATION</scope>
</reference>
<gene>
    <name type="primary">mleN</name>
    <name type="synonym">yqkI</name>
    <name type="ordered locus">BSU23560</name>
</gene>
<comment type="function">
    <text>Couples proton uptake and Na(+) efflux to the substrate-product malate/lactate antiport, in an electroneutral malate-2H(+)/Na(+)-lactate exchange. Plays a role in supporting growth to high density on malate at reduced protonmotive force.</text>
</comment>
<comment type="subcellular location">
    <subcellularLocation>
        <location>Cell membrane</location>
        <topology>Multi-pass membrane protein</topology>
    </subcellularLocation>
</comment>
<comment type="similarity">
    <text evidence="2">Belongs to the NhaC Na(+)/H(+) (TC 2.A.35) antiporter family.</text>
</comment>
<feature type="chain" id="PRO_0000052417" description="Malate-2H(+)/Na(+)-lactate antiporter">
    <location>
        <begin position="1"/>
        <end position="468"/>
    </location>
</feature>
<feature type="transmembrane region" description="Helical" evidence="1">
    <location>
        <begin position="9"/>
        <end position="29"/>
    </location>
</feature>
<feature type="transmembrane region" description="Helical" evidence="1">
    <location>
        <begin position="30"/>
        <end position="50"/>
    </location>
</feature>
<feature type="transmembrane region" description="Helical" evidence="1">
    <location>
        <begin position="73"/>
        <end position="93"/>
    </location>
</feature>
<feature type="transmembrane region" description="Helical" evidence="1">
    <location>
        <begin position="96"/>
        <end position="116"/>
    </location>
</feature>
<feature type="transmembrane region" description="Helical" evidence="1">
    <location>
        <begin position="136"/>
        <end position="156"/>
    </location>
</feature>
<feature type="transmembrane region" description="Helical" evidence="1">
    <location>
        <begin position="192"/>
        <end position="212"/>
    </location>
</feature>
<feature type="transmembrane region" description="Helical" evidence="1">
    <location>
        <begin position="233"/>
        <end position="253"/>
    </location>
</feature>
<feature type="transmembrane region" description="Helical" evidence="1">
    <location>
        <begin position="258"/>
        <end position="278"/>
    </location>
</feature>
<feature type="transmembrane region" description="Helical" evidence="1">
    <location>
        <begin position="309"/>
        <end position="329"/>
    </location>
</feature>
<feature type="transmembrane region" description="Helical" evidence="1">
    <location>
        <begin position="357"/>
        <end position="377"/>
    </location>
</feature>
<feature type="transmembrane region" description="Helical" evidence="1">
    <location>
        <begin position="405"/>
        <end position="425"/>
    </location>
</feature>
<feature type="transmembrane region" description="Helical" evidence="1">
    <location>
        <begin position="428"/>
        <end position="448"/>
    </location>
</feature>
<protein>
    <recommendedName>
        <fullName>Malate-2H(+)/Na(+)-lactate antiporter</fullName>
    </recommendedName>
</protein>
<dbReference type="EMBL" id="D84432">
    <property type="protein sequence ID" value="BAA12644.1"/>
    <property type="molecule type" value="Genomic_DNA"/>
</dbReference>
<dbReference type="EMBL" id="AL009126">
    <property type="protein sequence ID" value="CAB14288.1"/>
    <property type="molecule type" value="Genomic_DNA"/>
</dbReference>
<dbReference type="PIR" id="B69967">
    <property type="entry name" value="B69967"/>
</dbReference>
<dbReference type="RefSeq" id="NP_390237.1">
    <property type="nucleotide sequence ID" value="NC_000964.3"/>
</dbReference>
<dbReference type="RefSeq" id="WP_003230432.1">
    <property type="nucleotide sequence ID" value="NZ_OZ025638.1"/>
</dbReference>
<dbReference type="SMR" id="P54571"/>
<dbReference type="FunCoup" id="P54571">
    <property type="interactions" value="140"/>
</dbReference>
<dbReference type="STRING" id="224308.BSU23560"/>
<dbReference type="TCDB" id="2.A.35.1.2">
    <property type="family name" value="the nhac na(+):h(+) antiporter (nhac) family"/>
</dbReference>
<dbReference type="PaxDb" id="224308-BSU23560"/>
<dbReference type="EnsemblBacteria" id="CAB14288">
    <property type="protein sequence ID" value="CAB14288"/>
    <property type="gene ID" value="BSU_23560"/>
</dbReference>
<dbReference type="GeneID" id="938720"/>
<dbReference type="KEGG" id="bsu:BSU23560"/>
<dbReference type="PATRIC" id="fig|224308.179.peg.2568"/>
<dbReference type="eggNOG" id="COG1757">
    <property type="taxonomic scope" value="Bacteria"/>
</dbReference>
<dbReference type="InParanoid" id="P54571"/>
<dbReference type="OrthoDB" id="9762978at2"/>
<dbReference type="PhylomeDB" id="P54571"/>
<dbReference type="BioCyc" id="BSUB:BSU23560-MONOMER"/>
<dbReference type="Proteomes" id="UP000001570">
    <property type="component" value="Chromosome"/>
</dbReference>
<dbReference type="GO" id="GO:0005886">
    <property type="term" value="C:plasma membrane"/>
    <property type="evidence" value="ECO:0007669"/>
    <property type="project" value="UniProtKB-SubCell"/>
</dbReference>
<dbReference type="GO" id="GO:0015385">
    <property type="term" value="F:sodium:proton antiporter activity"/>
    <property type="evidence" value="ECO:0000314"/>
    <property type="project" value="CACAO"/>
</dbReference>
<dbReference type="InterPro" id="IPR004770">
    <property type="entry name" value="Na/H_antiport_NhaC"/>
</dbReference>
<dbReference type="InterPro" id="IPR018461">
    <property type="entry name" value="Na/H_Antiport_NhaC-like_C"/>
</dbReference>
<dbReference type="InterPro" id="IPR052180">
    <property type="entry name" value="NhaC_Na-H+_Antiporter"/>
</dbReference>
<dbReference type="NCBIfam" id="TIGR00931">
    <property type="entry name" value="antiport_nhaC"/>
    <property type="match status" value="1"/>
</dbReference>
<dbReference type="PANTHER" id="PTHR33451">
    <property type="entry name" value="MALATE-2H(+)/NA(+)-LACTATE ANTIPORTER"/>
    <property type="match status" value="1"/>
</dbReference>
<dbReference type="PANTHER" id="PTHR33451:SF3">
    <property type="entry name" value="MALATE-2H(+)_NA(+)-LACTATE ANTIPORTER"/>
    <property type="match status" value="1"/>
</dbReference>
<dbReference type="Pfam" id="PF03553">
    <property type="entry name" value="Na_H_antiporter"/>
    <property type="match status" value="1"/>
</dbReference>
<sequence>MKDVRLPTLFEIIIVLGVFLALVLSFTVFLDLPIQLALFVSWFIAMLLGIRLGYSYKDLQNAIVHGISNGLEAVLILVSVGALIGTWIAGGVVPTLIYYGLEFIHPSIFLLATLIICSIMSVATGTSWGTVGTAGIAMIAIGEGLGIPLPLVAGAILSGAYFGDKLSPLSDSTVLASSLSKVDVLAHVRAMLYLSIPAYVITAILFTVVGFMYGGKNIDLDKVEFLKSSLQNTFDIHIWMLIPAVLVIVLLAMKKPSMPVIVIGALLGAIWAVVFQGMDIAHAIATAYNGFSIKTDVEFLNGLLNRGGIVGMLDSLVVIIFGLGFGGLLEKLGVLKVIVSTFEKKLTSAGNVTLSTLIVAFLANIFGCAMYVSLILTPKIMEDSYDRLHLDRRVLSRNSEVGGTLTSGMVPWSDNGIYMAGILGVSTFSYLPFMWLSFVAIGLAIIYGYTGKFIWYTKNNTVKAEKLG</sequence>
<name>MLEN_BACSU</name>
<accession>P54571</accession>
<keyword id="KW-0050">Antiport</keyword>
<keyword id="KW-1003">Cell membrane</keyword>
<keyword id="KW-0406">Ion transport</keyword>
<keyword id="KW-0472">Membrane</keyword>
<keyword id="KW-1185">Reference proteome</keyword>
<keyword id="KW-0915">Sodium</keyword>
<keyword id="KW-0739">Sodium transport</keyword>
<keyword id="KW-0812">Transmembrane</keyword>
<keyword id="KW-1133">Transmembrane helix</keyword>
<keyword id="KW-0813">Transport</keyword>